<comment type="function">
    <text evidence="1">Enhances the translation of downstream ORFs on polycistronic mRNAs.</text>
</comment>
<comment type="subcellular location">
    <subcellularLocation>
        <location>Host cytoplasm</location>
    </subcellularLocation>
    <text evidence="1">Found in cytoplasmic occlusion bodies.</text>
</comment>
<comment type="miscellaneous">
    <text evidence="1">The inclusion bodies are the site of viral DNA synthesis, virion assembly and accumulation in the infected cell.</text>
</comment>
<comment type="similarity">
    <text evidence="3">Belongs to the caulimoviridae viroplasmin family.</text>
</comment>
<proteinExistence type="inferred from homology"/>
<organism>
    <name type="scientific">Cestrum yellow leaf curling virus</name>
    <name type="common">CmYLCV</name>
    <dbReference type="NCBI Taxonomy" id="175814"/>
    <lineage>
        <taxon>Viruses</taxon>
        <taxon>Riboviria</taxon>
        <taxon>Pararnavirae</taxon>
        <taxon>Artverviricota</taxon>
        <taxon>Revtraviricetes</taxon>
        <taxon>Ortervirales</taxon>
        <taxon>Caulimoviridae</taxon>
        <taxon>Soymovirus</taxon>
        <taxon>Soymovirus crispocestri</taxon>
    </lineage>
</organism>
<gene>
    <name type="ORF">ORF VI</name>
</gene>
<reference key="1">
    <citation type="journal article" date="2003" name="J. Gen. Virol.">
        <title>Characterization of Cestrum yellow leaf curling virus: a new member of the family Caulimoviridae.</title>
        <authorList>
            <person name="Stavolone L."/>
            <person name="Ragozzino A."/>
            <person name="Hohn T."/>
        </authorList>
    </citation>
    <scope>NUCLEOTIDE SEQUENCE [GENOMIC DNA]</scope>
</reference>
<protein>
    <recommendedName>
        <fullName>Transactivator/viroplasmin protein</fullName>
        <shortName>Tav</shortName>
    </recommendedName>
    <alternativeName>
        <fullName>Inclusion body matrix protein</fullName>
    </alternativeName>
</protein>
<sequence length="531" mass="59789">METAIIAMETQLQQMLNNLQIAKNEAKEAQQKVAKLEVEISKFQSGIEMMKQFMPAITSEVCKQSVVDPSSNSEKMQEIASGKKPIAEGVSATSPEQTATGKDISKPLMADALPKSINSTNVETSPVQTVTGKDSSKPLMADALPKSINSVKTETGKKSWADIATEDEREPSSLVQLPLSGKKFYVLFNTPRKGIFSDWSQIAPLITGVKGAVHKSYPTMEAAKKALKDAEQMNGLKASSLEKLQPRVPAKKRQSIQEMVMARGGFKQNTPQNTYVFSPENRTMVNKKIFEWKKDEPNSEFYPIEIRGQTKIVLFPGADPVFAYTAYLMGYVKQIIIFEEFKFLSCFPRLFANCVEKFYNKIGRRETVINVRSSFPLLDETMKIRIPAINVAVMAMFNKQFEPFAEEIKLDIQLEDVLASIEGVYERTQKIDERSKLKVWYQSDSTILFGTSPKEIEDVDIRSLLRFEEMFKAMETGPLVNLQDEERKILCQKMQKYKGHSCQLCKSESSGPQTSEEGLQESEDEDFSVLV</sequence>
<organismHost>
    <name type="scientific">Cestrum parqui</name>
    <dbReference type="NCBI Taxonomy" id="142762"/>
</organismHost>
<dbReference type="EMBL" id="AF364175">
    <property type="protein sequence ID" value="AAP82459.1"/>
    <property type="molecule type" value="Genomic_DNA"/>
</dbReference>
<dbReference type="RefSeq" id="NP_861547.1">
    <property type="nucleotide sequence ID" value="NC_004324.3"/>
</dbReference>
<dbReference type="SMR" id="Q7TBL3"/>
<dbReference type="KEGG" id="vg:1732960"/>
<dbReference type="OrthoDB" id="3at187214"/>
<dbReference type="Proteomes" id="UP000007763">
    <property type="component" value="Genome"/>
</dbReference>
<dbReference type="GO" id="GO:0030430">
    <property type="term" value="C:host cell cytoplasm"/>
    <property type="evidence" value="ECO:0007669"/>
    <property type="project" value="UniProtKB-SubCell"/>
</dbReference>
<dbReference type="GO" id="GO:0006417">
    <property type="term" value="P:regulation of translation"/>
    <property type="evidence" value="ECO:0007669"/>
    <property type="project" value="UniProtKB-KW"/>
</dbReference>
<dbReference type="Gene3D" id="3.40.970.10">
    <property type="entry name" value="Ribonuclease H1, N-terminal domain"/>
    <property type="match status" value="1"/>
</dbReference>
<dbReference type="InterPro" id="IPR009027">
    <property type="entry name" value="Ribosomal_bL9/RNase_H1_N"/>
</dbReference>
<dbReference type="InterPro" id="IPR011320">
    <property type="entry name" value="RNase_H1_N"/>
</dbReference>
<dbReference type="InterPro" id="IPR037056">
    <property type="entry name" value="RNase_H1_N_sf"/>
</dbReference>
<dbReference type="Pfam" id="PF01693">
    <property type="entry name" value="Cauli_VI"/>
    <property type="match status" value="1"/>
</dbReference>
<dbReference type="SUPFAM" id="SSF55658">
    <property type="entry name" value="L9 N-domain-like"/>
    <property type="match status" value="1"/>
</dbReference>
<accession>Q7TBL3</accession>
<name>IBMP_CYLCV</name>
<feature type="chain" id="PRO_0000317780" description="Transactivator/viroplasmin protein">
    <location>
        <begin position="1"/>
        <end position="531"/>
    </location>
</feature>
<feature type="region of interest" description="Disordered" evidence="2">
    <location>
        <begin position="80"/>
        <end position="101"/>
    </location>
</feature>
<feature type="region of interest" description="Disordered" evidence="2">
    <location>
        <begin position="505"/>
        <end position="531"/>
    </location>
</feature>
<feature type="compositionally biased region" description="Polar residues" evidence="2">
    <location>
        <begin position="91"/>
        <end position="100"/>
    </location>
</feature>
<feature type="compositionally biased region" description="Polar residues" evidence="2">
    <location>
        <begin position="505"/>
        <end position="517"/>
    </location>
</feature>
<feature type="compositionally biased region" description="Acidic residues" evidence="2">
    <location>
        <begin position="518"/>
        <end position="531"/>
    </location>
</feature>
<keyword id="KW-1035">Host cytoplasm</keyword>
<keyword id="KW-1185">Reference proteome</keyword>
<keyword id="KW-0810">Translation regulation</keyword>
<evidence type="ECO:0000250" key="1"/>
<evidence type="ECO:0000256" key="2">
    <source>
        <dbReference type="SAM" id="MobiDB-lite"/>
    </source>
</evidence>
<evidence type="ECO:0000305" key="3"/>